<gene>
    <name evidence="1" type="primary">nuoD</name>
    <name type="ordered locus">Xfasm12_0272</name>
</gene>
<accession>B0U1W8</accession>
<protein>
    <recommendedName>
        <fullName evidence="1">NADH-quinone oxidoreductase subunit D</fullName>
        <ecNumber evidence="1">7.1.1.-</ecNumber>
    </recommendedName>
    <alternativeName>
        <fullName evidence="1">NADH dehydrogenase I subunit D</fullName>
    </alternativeName>
    <alternativeName>
        <fullName evidence="1">NDH-1 subunit D</fullName>
    </alternativeName>
</protein>
<dbReference type="EC" id="7.1.1.-" evidence="1"/>
<dbReference type="EMBL" id="CP000941">
    <property type="protein sequence ID" value="ACA11295.1"/>
    <property type="molecule type" value="Genomic_DNA"/>
</dbReference>
<dbReference type="RefSeq" id="WP_004085300.1">
    <property type="nucleotide sequence ID" value="NC_010513.1"/>
</dbReference>
<dbReference type="SMR" id="B0U1W8"/>
<dbReference type="KEGG" id="xfm:Xfasm12_0272"/>
<dbReference type="HOGENOM" id="CLU_015134_1_1_6"/>
<dbReference type="GO" id="GO:0005886">
    <property type="term" value="C:plasma membrane"/>
    <property type="evidence" value="ECO:0007669"/>
    <property type="project" value="UniProtKB-SubCell"/>
</dbReference>
<dbReference type="GO" id="GO:0051287">
    <property type="term" value="F:NAD binding"/>
    <property type="evidence" value="ECO:0007669"/>
    <property type="project" value="InterPro"/>
</dbReference>
<dbReference type="GO" id="GO:0050136">
    <property type="term" value="F:NADH:ubiquinone reductase (non-electrogenic) activity"/>
    <property type="evidence" value="ECO:0007669"/>
    <property type="project" value="UniProtKB-UniRule"/>
</dbReference>
<dbReference type="GO" id="GO:0048038">
    <property type="term" value="F:quinone binding"/>
    <property type="evidence" value="ECO:0007669"/>
    <property type="project" value="UniProtKB-KW"/>
</dbReference>
<dbReference type="FunFam" id="1.10.645.10:FF:000005">
    <property type="entry name" value="NADH-quinone oxidoreductase subunit D"/>
    <property type="match status" value="1"/>
</dbReference>
<dbReference type="Gene3D" id="1.10.645.10">
    <property type="entry name" value="Cytochrome-c3 Hydrogenase, chain B"/>
    <property type="match status" value="1"/>
</dbReference>
<dbReference type="HAMAP" id="MF_01358">
    <property type="entry name" value="NDH1_NuoD"/>
    <property type="match status" value="1"/>
</dbReference>
<dbReference type="InterPro" id="IPR001135">
    <property type="entry name" value="NADH_Q_OxRdtase_suD"/>
</dbReference>
<dbReference type="InterPro" id="IPR014029">
    <property type="entry name" value="NADH_UbQ_OxRdtase_49kDa_CS"/>
</dbReference>
<dbReference type="InterPro" id="IPR022885">
    <property type="entry name" value="NDH1_su_D/H"/>
</dbReference>
<dbReference type="InterPro" id="IPR029014">
    <property type="entry name" value="NiFe-Hase_large"/>
</dbReference>
<dbReference type="NCBIfam" id="TIGR01962">
    <property type="entry name" value="NuoD"/>
    <property type="match status" value="1"/>
</dbReference>
<dbReference type="NCBIfam" id="NF004739">
    <property type="entry name" value="PRK06075.1"/>
    <property type="match status" value="1"/>
</dbReference>
<dbReference type="PANTHER" id="PTHR11993:SF10">
    <property type="entry name" value="NADH DEHYDROGENASE [UBIQUINONE] IRON-SULFUR PROTEIN 2, MITOCHONDRIAL"/>
    <property type="match status" value="1"/>
</dbReference>
<dbReference type="PANTHER" id="PTHR11993">
    <property type="entry name" value="NADH-UBIQUINONE OXIDOREDUCTASE 49 KDA SUBUNIT"/>
    <property type="match status" value="1"/>
</dbReference>
<dbReference type="Pfam" id="PF00346">
    <property type="entry name" value="Complex1_49kDa"/>
    <property type="match status" value="1"/>
</dbReference>
<dbReference type="SUPFAM" id="SSF56762">
    <property type="entry name" value="HydB/Nqo4-like"/>
    <property type="match status" value="1"/>
</dbReference>
<dbReference type="PROSITE" id="PS00535">
    <property type="entry name" value="COMPLEX1_49K"/>
    <property type="match status" value="1"/>
</dbReference>
<name>NUOD_XYLFM</name>
<evidence type="ECO:0000255" key="1">
    <source>
        <dbReference type="HAMAP-Rule" id="MF_01358"/>
    </source>
</evidence>
<reference key="1">
    <citation type="journal article" date="2010" name="J. Bacteriol.">
        <title>Whole genome sequences of two Xylella fastidiosa strains (M12 and M23) causing almond leaf scorch disease in California.</title>
        <authorList>
            <person name="Chen J."/>
            <person name="Xie G."/>
            <person name="Han S."/>
            <person name="Chertkov O."/>
            <person name="Sims D."/>
            <person name="Civerolo E.L."/>
        </authorList>
    </citation>
    <scope>NUCLEOTIDE SEQUENCE [LARGE SCALE GENOMIC DNA]</scope>
    <source>
        <strain>M12</strain>
    </source>
</reference>
<keyword id="KW-0997">Cell inner membrane</keyword>
<keyword id="KW-1003">Cell membrane</keyword>
<keyword id="KW-0472">Membrane</keyword>
<keyword id="KW-0520">NAD</keyword>
<keyword id="KW-0874">Quinone</keyword>
<keyword id="KW-1278">Translocase</keyword>
<keyword id="KW-0813">Transport</keyword>
<keyword id="KW-0830">Ubiquinone</keyword>
<feature type="chain" id="PRO_0000371954" description="NADH-quinone oxidoreductase subunit D">
    <location>
        <begin position="1"/>
        <end position="435"/>
    </location>
</feature>
<comment type="function">
    <text evidence="1">NDH-1 shuttles electrons from NADH, via FMN and iron-sulfur (Fe-S) centers, to quinones in the respiratory chain. The immediate electron acceptor for the enzyme in this species is believed to be ubiquinone. Couples the redox reaction to proton translocation (for every two electrons transferred, four hydrogen ions are translocated across the cytoplasmic membrane), and thus conserves the redox energy in a proton gradient.</text>
</comment>
<comment type="catalytic activity">
    <reaction evidence="1">
        <text>a quinone + NADH + 5 H(+)(in) = a quinol + NAD(+) + 4 H(+)(out)</text>
        <dbReference type="Rhea" id="RHEA:57888"/>
        <dbReference type="ChEBI" id="CHEBI:15378"/>
        <dbReference type="ChEBI" id="CHEBI:24646"/>
        <dbReference type="ChEBI" id="CHEBI:57540"/>
        <dbReference type="ChEBI" id="CHEBI:57945"/>
        <dbReference type="ChEBI" id="CHEBI:132124"/>
    </reaction>
</comment>
<comment type="subunit">
    <text evidence="1">NDH-1 is composed of 14 different subunits. Subunits NuoB, C, D, E, F, and G constitute the peripheral sector of the complex.</text>
</comment>
<comment type="subcellular location">
    <subcellularLocation>
        <location evidence="1">Cell inner membrane</location>
        <topology evidence="1">Peripheral membrane protein</topology>
        <orientation evidence="1">Cytoplasmic side</orientation>
    </subcellularLocation>
</comment>
<comment type="similarity">
    <text evidence="1">Belongs to the complex I 49 kDa subunit family.</text>
</comment>
<sequence>MNQIRQAPAASASNATESKQEIRNYTMNFGPQHPAAHGVLRLILEMDGETVVRADPHIGLLHRGTEKLAESKPFNQSIGYMDRLDYVSMMCNEHAYVRAIETLIGIQAPERAQYIRTMFDEITRILNHLMWLGSNALDLGAMAVMLYAFREREELMDVYEAISGARMHAAYYRPGGVYRDLPDTMPKYKQSRWHKGKALKRLNAAREGSMLDFLEHFTDTFPQRIDEYETLLTDNRIWKQRTVGVGVIEPDVAKAWGMTGVMLRGSGIAWDLRKKQPYAKYDAVDFDIPLGTCGDCYDRYLCRVAEMRESNRIIKQCVQWLKVNPGQVMVENFKVAPPKRESMKDDMEALIHHFKLFSEGYCVPAGETYSAVEAPKGEFGCYLISDGANKPFRVHLRAPGFAHLSSMDAVVRGYMLADVVAMIGTYDLVFGEVDR</sequence>
<proteinExistence type="inferred from homology"/>
<organism>
    <name type="scientific">Xylella fastidiosa (strain M12)</name>
    <dbReference type="NCBI Taxonomy" id="405440"/>
    <lineage>
        <taxon>Bacteria</taxon>
        <taxon>Pseudomonadati</taxon>
        <taxon>Pseudomonadota</taxon>
        <taxon>Gammaproteobacteria</taxon>
        <taxon>Lysobacterales</taxon>
        <taxon>Lysobacteraceae</taxon>
        <taxon>Xylella</taxon>
    </lineage>
</organism>